<sequence>MSIDFQQLPHAGIRSLIPYVPGKSIEELAKEKGITDIIKLASNENPLGCSPLALSVIQTMSSHYIATYPSPWNHPLMSKLASYLKVKPEQLFLSNGSDYLFNILLNCFALHTDRHILTHDYAFSTYAIQANSLQIPINSVPIGHNWEVNITDIVNACNQQTGIIFIANPNNPTGVLIQQEEIKYLLEQIPKSTLLVLDEAYYEFAASQLTVNSLDWLEEHPNLVVTRTFSKIYGMAGLRLGYAIANPSIINILKRVQLPFIVNQVALAAAYAAIDDDDFIQSSLKMNNEGMLQLQAGFNELNIKYLPSSCNFLTFDCEEDSMALYNYLLDNGIIVRPLHAYKMNNFIRVTIGTKEQNSRFLTALKNFYL</sequence>
<organism>
    <name type="scientific">Legionella pneumophila subsp. pneumophila (strain Philadelphia 1 / ATCC 33152 / DSM 7513)</name>
    <dbReference type="NCBI Taxonomy" id="272624"/>
    <lineage>
        <taxon>Bacteria</taxon>
        <taxon>Pseudomonadati</taxon>
        <taxon>Pseudomonadota</taxon>
        <taxon>Gammaproteobacteria</taxon>
        <taxon>Legionellales</taxon>
        <taxon>Legionellaceae</taxon>
        <taxon>Legionella</taxon>
    </lineage>
</organism>
<gene>
    <name evidence="1" type="primary">hisC2</name>
    <name type="ordered locus">lpg1998</name>
</gene>
<comment type="catalytic activity">
    <reaction evidence="1">
        <text>L-histidinol phosphate + 2-oxoglutarate = 3-(imidazol-4-yl)-2-oxopropyl phosphate + L-glutamate</text>
        <dbReference type="Rhea" id="RHEA:23744"/>
        <dbReference type="ChEBI" id="CHEBI:16810"/>
        <dbReference type="ChEBI" id="CHEBI:29985"/>
        <dbReference type="ChEBI" id="CHEBI:57766"/>
        <dbReference type="ChEBI" id="CHEBI:57980"/>
        <dbReference type="EC" id="2.6.1.9"/>
    </reaction>
</comment>
<comment type="cofactor">
    <cofactor evidence="1">
        <name>pyridoxal 5'-phosphate</name>
        <dbReference type="ChEBI" id="CHEBI:597326"/>
    </cofactor>
</comment>
<comment type="pathway">
    <text evidence="1">Amino-acid biosynthesis; L-histidine biosynthesis; L-histidine from 5-phospho-alpha-D-ribose 1-diphosphate: step 7/9.</text>
</comment>
<comment type="subunit">
    <text evidence="1">Homodimer.</text>
</comment>
<comment type="similarity">
    <text evidence="1">Belongs to the class-II pyridoxal-phosphate-dependent aminotransferase family. Histidinol-phosphate aminotransferase subfamily.</text>
</comment>
<comment type="sequence caution" evidence="2">
    <conflict type="erroneous initiation">
        <sequence resource="EMBL-CDS" id="AAU28067"/>
    </conflict>
</comment>
<reference key="1">
    <citation type="journal article" date="2004" name="Science">
        <title>The genomic sequence of the accidental pathogen Legionella pneumophila.</title>
        <authorList>
            <person name="Chien M."/>
            <person name="Morozova I."/>
            <person name="Shi S."/>
            <person name="Sheng H."/>
            <person name="Chen J."/>
            <person name="Gomez S.M."/>
            <person name="Asamani G."/>
            <person name="Hill K."/>
            <person name="Nuara J."/>
            <person name="Feder M."/>
            <person name="Rineer J."/>
            <person name="Greenberg J.J."/>
            <person name="Steshenko V."/>
            <person name="Park S.H."/>
            <person name="Zhao B."/>
            <person name="Teplitskaya E."/>
            <person name="Edwards J.R."/>
            <person name="Pampou S."/>
            <person name="Georghiou A."/>
            <person name="Chou I.-C."/>
            <person name="Iannuccilli W."/>
            <person name="Ulz M.E."/>
            <person name="Kim D.H."/>
            <person name="Geringer-Sameth A."/>
            <person name="Goldsberry C."/>
            <person name="Morozov P."/>
            <person name="Fischer S.G."/>
            <person name="Segal G."/>
            <person name="Qu X."/>
            <person name="Rzhetsky A."/>
            <person name="Zhang P."/>
            <person name="Cayanis E."/>
            <person name="De Jong P.J."/>
            <person name="Ju J."/>
            <person name="Kalachikov S."/>
            <person name="Shuman H.A."/>
            <person name="Russo J.J."/>
        </authorList>
    </citation>
    <scope>NUCLEOTIDE SEQUENCE [LARGE SCALE GENOMIC DNA]</scope>
    <source>
        <strain>Philadelphia 1 / ATCC 33152 / DSM 7513</strain>
    </source>
</reference>
<name>HIS82_LEGPH</name>
<feature type="chain" id="PRO_0000153382" description="Histidinol-phosphate aminotransferase 2">
    <location>
        <begin position="1"/>
        <end position="369"/>
    </location>
</feature>
<feature type="modified residue" description="N6-(pyridoxal phosphate)lysine" evidence="1">
    <location>
        <position position="231"/>
    </location>
</feature>
<accession>Q5ZU10</accession>
<protein>
    <recommendedName>
        <fullName evidence="1">Histidinol-phosphate aminotransferase 2</fullName>
        <ecNumber evidence="1">2.6.1.9</ecNumber>
    </recommendedName>
    <alternativeName>
        <fullName evidence="1">Imidazole acetol-phosphate transaminase 2</fullName>
    </alternativeName>
</protein>
<dbReference type="EC" id="2.6.1.9" evidence="1"/>
<dbReference type="EMBL" id="AE017354">
    <property type="protein sequence ID" value="AAU28067.1"/>
    <property type="status" value="ALT_INIT"/>
    <property type="molecule type" value="Genomic_DNA"/>
</dbReference>
<dbReference type="RefSeq" id="YP_096014.1">
    <property type="nucleotide sequence ID" value="NC_002942.5"/>
</dbReference>
<dbReference type="SMR" id="Q5ZU10"/>
<dbReference type="STRING" id="272624.lpg1998"/>
<dbReference type="PaxDb" id="272624-lpg1998"/>
<dbReference type="KEGG" id="lpn:lpg1998"/>
<dbReference type="PATRIC" id="fig|272624.6.peg.2091"/>
<dbReference type="eggNOG" id="COG0079">
    <property type="taxonomic scope" value="Bacteria"/>
</dbReference>
<dbReference type="HOGENOM" id="CLU_017584_3_3_6"/>
<dbReference type="OrthoDB" id="9813612at2"/>
<dbReference type="UniPathway" id="UPA00031">
    <property type="reaction ID" value="UER00012"/>
</dbReference>
<dbReference type="Proteomes" id="UP000000609">
    <property type="component" value="Chromosome"/>
</dbReference>
<dbReference type="GO" id="GO:0004400">
    <property type="term" value="F:histidinol-phosphate transaminase activity"/>
    <property type="evidence" value="ECO:0007669"/>
    <property type="project" value="UniProtKB-UniRule"/>
</dbReference>
<dbReference type="GO" id="GO:0030170">
    <property type="term" value="F:pyridoxal phosphate binding"/>
    <property type="evidence" value="ECO:0007669"/>
    <property type="project" value="InterPro"/>
</dbReference>
<dbReference type="GO" id="GO:0000105">
    <property type="term" value="P:L-histidine biosynthetic process"/>
    <property type="evidence" value="ECO:0007669"/>
    <property type="project" value="UniProtKB-UniRule"/>
</dbReference>
<dbReference type="CDD" id="cd00609">
    <property type="entry name" value="AAT_like"/>
    <property type="match status" value="1"/>
</dbReference>
<dbReference type="Gene3D" id="3.90.1150.10">
    <property type="entry name" value="Aspartate Aminotransferase, domain 1"/>
    <property type="match status" value="1"/>
</dbReference>
<dbReference type="Gene3D" id="3.40.640.10">
    <property type="entry name" value="Type I PLP-dependent aspartate aminotransferase-like (Major domain)"/>
    <property type="match status" value="1"/>
</dbReference>
<dbReference type="HAMAP" id="MF_01023">
    <property type="entry name" value="HisC_aminotrans_2"/>
    <property type="match status" value="1"/>
</dbReference>
<dbReference type="InterPro" id="IPR004839">
    <property type="entry name" value="Aminotransferase_I/II_large"/>
</dbReference>
<dbReference type="InterPro" id="IPR005861">
    <property type="entry name" value="HisP_aminotrans"/>
</dbReference>
<dbReference type="InterPro" id="IPR050106">
    <property type="entry name" value="HistidinolP_aminotransfase"/>
</dbReference>
<dbReference type="InterPro" id="IPR015424">
    <property type="entry name" value="PyrdxlP-dep_Trfase"/>
</dbReference>
<dbReference type="InterPro" id="IPR015421">
    <property type="entry name" value="PyrdxlP-dep_Trfase_major"/>
</dbReference>
<dbReference type="InterPro" id="IPR015422">
    <property type="entry name" value="PyrdxlP-dep_Trfase_small"/>
</dbReference>
<dbReference type="NCBIfam" id="TIGR01141">
    <property type="entry name" value="hisC"/>
    <property type="match status" value="1"/>
</dbReference>
<dbReference type="PANTHER" id="PTHR43643:SF3">
    <property type="entry name" value="HISTIDINOL-PHOSPHATE AMINOTRANSFERASE"/>
    <property type="match status" value="1"/>
</dbReference>
<dbReference type="PANTHER" id="PTHR43643">
    <property type="entry name" value="HISTIDINOL-PHOSPHATE AMINOTRANSFERASE 2"/>
    <property type="match status" value="1"/>
</dbReference>
<dbReference type="Pfam" id="PF00155">
    <property type="entry name" value="Aminotran_1_2"/>
    <property type="match status" value="1"/>
</dbReference>
<dbReference type="SUPFAM" id="SSF53383">
    <property type="entry name" value="PLP-dependent transferases"/>
    <property type="match status" value="1"/>
</dbReference>
<proteinExistence type="inferred from homology"/>
<evidence type="ECO:0000255" key="1">
    <source>
        <dbReference type="HAMAP-Rule" id="MF_01023"/>
    </source>
</evidence>
<evidence type="ECO:0000305" key="2"/>
<keyword id="KW-0028">Amino-acid biosynthesis</keyword>
<keyword id="KW-0032">Aminotransferase</keyword>
<keyword id="KW-0368">Histidine biosynthesis</keyword>
<keyword id="KW-0663">Pyridoxal phosphate</keyword>
<keyword id="KW-1185">Reference proteome</keyword>
<keyword id="KW-0808">Transferase</keyword>